<comment type="similarity">
    <text evidence="1">Belongs to the bacterial ribosomal protein bL33 family.</text>
</comment>
<dbReference type="EMBL" id="BX248356">
    <property type="protein sequence ID" value="CAE49366.1"/>
    <property type="molecule type" value="Genomic_DNA"/>
</dbReference>
<dbReference type="RefSeq" id="WP_003850744.1">
    <property type="nucleotide sequence ID" value="NC_002935.2"/>
</dbReference>
<dbReference type="SMR" id="Q6NIC7"/>
<dbReference type="STRING" id="257309.DIP0850"/>
<dbReference type="GeneID" id="97331558"/>
<dbReference type="KEGG" id="cdi:DIP0850"/>
<dbReference type="HOGENOM" id="CLU_190949_1_1_11"/>
<dbReference type="Proteomes" id="UP000002198">
    <property type="component" value="Chromosome"/>
</dbReference>
<dbReference type="GO" id="GO:0022625">
    <property type="term" value="C:cytosolic large ribosomal subunit"/>
    <property type="evidence" value="ECO:0007669"/>
    <property type="project" value="TreeGrafter"/>
</dbReference>
<dbReference type="GO" id="GO:0003735">
    <property type="term" value="F:structural constituent of ribosome"/>
    <property type="evidence" value="ECO:0007669"/>
    <property type="project" value="InterPro"/>
</dbReference>
<dbReference type="GO" id="GO:0006412">
    <property type="term" value="P:translation"/>
    <property type="evidence" value="ECO:0007669"/>
    <property type="project" value="UniProtKB-UniRule"/>
</dbReference>
<dbReference type="FunFam" id="2.20.28.120:FF:000002">
    <property type="entry name" value="50S ribosomal protein L33"/>
    <property type="match status" value="1"/>
</dbReference>
<dbReference type="Gene3D" id="2.20.28.120">
    <property type="entry name" value="Ribosomal protein L33"/>
    <property type="match status" value="1"/>
</dbReference>
<dbReference type="HAMAP" id="MF_00294">
    <property type="entry name" value="Ribosomal_bL33"/>
    <property type="match status" value="1"/>
</dbReference>
<dbReference type="InterPro" id="IPR001705">
    <property type="entry name" value="Ribosomal_bL33"/>
</dbReference>
<dbReference type="InterPro" id="IPR018264">
    <property type="entry name" value="Ribosomal_bL33_CS"/>
</dbReference>
<dbReference type="InterPro" id="IPR038584">
    <property type="entry name" value="Ribosomal_bL33_sf"/>
</dbReference>
<dbReference type="InterPro" id="IPR011332">
    <property type="entry name" value="Ribosomal_zn-bd"/>
</dbReference>
<dbReference type="NCBIfam" id="NF001860">
    <property type="entry name" value="PRK00595.1"/>
    <property type="match status" value="1"/>
</dbReference>
<dbReference type="NCBIfam" id="TIGR01023">
    <property type="entry name" value="rpmG_bact"/>
    <property type="match status" value="1"/>
</dbReference>
<dbReference type="PANTHER" id="PTHR15238">
    <property type="entry name" value="54S RIBOSOMAL PROTEIN L39, MITOCHONDRIAL"/>
    <property type="match status" value="1"/>
</dbReference>
<dbReference type="PANTHER" id="PTHR15238:SF1">
    <property type="entry name" value="LARGE RIBOSOMAL SUBUNIT PROTEIN BL33M"/>
    <property type="match status" value="1"/>
</dbReference>
<dbReference type="Pfam" id="PF00471">
    <property type="entry name" value="Ribosomal_L33"/>
    <property type="match status" value="1"/>
</dbReference>
<dbReference type="SUPFAM" id="SSF57829">
    <property type="entry name" value="Zn-binding ribosomal proteins"/>
    <property type="match status" value="1"/>
</dbReference>
<dbReference type="PROSITE" id="PS00582">
    <property type="entry name" value="RIBOSOMAL_L33"/>
    <property type="match status" value="1"/>
</dbReference>
<evidence type="ECO:0000255" key="1">
    <source>
        <dbReference type="HAMAP-Rule" id="MF_00294"/>
    </source>
</evidence>
<evidence type="ECO:0000305" key="2"/>
<name>RL33_CORDI</name>
<sequence length="54" mass="6460">MARNDIRPIIKLKSTAGTGYTYVTRKNKRNNPDRISLKKYDPVVRKHVEFREER</sequence>
<keyword id="KW-1185">Reference proteome</keyword>
<keyword id="KW-0687">Ribonucleoprotein</keyword>
<keyword id="KW-0689">Ribosomal protein</keyword>
<proteinExistence type="inferred from homology"/>
<organism>
    <name type="scientific">Corynebacterium diphtheriae (strain ATCC 700971 / NCTC 13129 / Biotype gravis)</name>
    <dbReference type="NCBI Taxonomy" id="257309"/>
    <lineage>
        <taxon>Bacteria</taxon>
        <taxon>Bacillati</taxon>
        <taxon>Actinomycetota</taxon>
        <taxon>Actinomycetes</taxon>
        <taxon>Mycobacteriales</taxon>
        <taxon>Corynebacteriaceae</taxon>
        <taxon>Corynebacterium</taxon>
    </lineage>
</organism>
<accession>Q6NIC7</accession>
<reference key="1">
    <citation type="journal article" date="2003" name="Nucleic Acids Res.">
        <title>The complete genome sequence and analysis of Corynebacterium diphtheriae NCTC13129.</title>
        <authorList>
            <person name="Cerdeno-Tarraga A.-M."/>
            <person name="Efstratiou A."/>
            <person name="Dover L.G."/>
            <person name="Holden M.T.G."/>
            <person name="Pallen M.J."/>
            <person name="Bentley S.D."/>
            <person name="Besra G.S."/>
            <person name="Churcher C.M."/>
            <person name="James K.D."/>
            <person name="De Zoysa A."/>
            <person name="Chillingworth T."/>
            <person name="Cronin A."/>
            <person name="Dowd L."/>
            <person name="Feltwell T."/>
            <person name="Hamlin N."/>
            <person name="Holroyd S."/>
            <person name="Jagels K."/>
            <person name="Moule S."/>
            <person name="Quail M.A."/>
            <person name="Rabbinowitsch E."/>
            <person name="Rutherford K.M."/>
            <person name="Thomson N.R."/>
            <person name="Unwin L."/>
            <person name="Whitehead S."/>
            <person name="Barrell B.G."/>
            <person name="Parkhill J."/>
        </authorList>
    </citation>
    <scope>NUCLEOTIDE SEQUENCE [LARGE SCALE GENOMIC DNA]</scope>
    <source>
        <strain>ATCC 700971 / NCTC 13129 / Biotype gravis</strain>
    </source>
</reference>
<gene>
    <name evidence="1" type="primary">rpmG</name>
    <name type="ordered locus">DIP0850</name>
</gene>
<protein>
    <recommendedName>
        <fullName evidence="1">Large ribosomal subunit protein bL33</fullName>
    </recommendedName>
    <alternativeName>
        <fullName evidence="2">50S ribosomal protein L33</fullName>
    </alternativeName>
</protein>
<feature type="chain" id="PRO_1000004158" description="Large ribosomal subunit protein bL33">
    <location>
        <begin position="1"/>
        <end position="54"/>
    </location>
</feature>